<reference key="1">
    <citation type="journal article" date="2011" name="Arch. Biochem. Biophys.">
        <title>Characterization of two methylenedioxy bridge-forming cytochrome P450-dependent enzymes of alkaloid formation in the Mexican prickly poppy Argemone mexicana.</title>
        <authorList>
            <person name="Diaz Chavez M.L."/>
            <person name="Rolf M."/>
            <person name="Gesell A."/>
            <person name="Kutchan T.M."/>
        </authorList>
    </citation>
    <scope>NUCLEOTIDE SEQUENCE [MRNA]</scope>
    <scope>FUNCTION</scope>
    <scope>CATALYTIC ACTIVITY</scope>
    <scope>BIOPHYSICOCHEMICAL PROPERTIES</scope>
    <scope>TISSUE SPECIFICITY</scope>
</reference>
<comment type="function">
    <text evidence="3">Methylenedioxy bridge-forming cytochrome P450 involved in the biosynthesis of isoquinoline alkaloids. Converts (S)-scoulerine into (S)-cheilanthifoline, a precursor of sanguinarine. Catalyzes an oxidative reaction that does not incorporate oxygen into the product.</text>
</comment>
<comment type="catalytic activity">
    <reaction evidence="3">
        <text>(S)-scoulerine + reduced [NADPH--hemoprotein reductase] + O2 = (S)-cheilanthifoline + oxidized [NADPH--hemoprotein reductase] + 2 H2O + H(+)</text>
        <dbReference type="Rhea" id="RHEA:20485"/>
        <dbReference type="Rhea" id="RHEA-COMP:11964"/>
        <dbReference type="Rhea" id="RHEA-COMP:11965"/>
        <dbReference type="ChEBI" id="CHEBI:15377"/>
        <dbReference type="ChEBI" id="CHEBI:15378"/>
        <dbReference type="ChEBI" id="CHEBI:15379"/>
        <dbReference type="ChEBI" id="CHEBI:16233"/>
        <dbReference type="ChEBI" id="CHEBI:17129"/>
        <dbReference type="ChEBI" id="CHEBI:57618"/>
        <dbReference type="ChEBI" id="CHEBI:58210"/>
        <dbReference type="EC" id="1.14.19.65"/>
    </reaction>
</comment>
<comment type="cofactor">
    <cofactor evidence="1">
        <name>heme</name>
        <dbReference type="ChEBI" id="CHEBI:30413"/>
    </cofactor>
</comment>
<comment type="biophysicochemical properties">
    <kinetics>
        <text evidence="3">kcat is 3.3 min(-1) for (S)-scoulerine.</text>
    </kinetics>
    <phDependence>
        <text evidence="3">Optimum pH is 7.5.</text>
    </phDependence>
    <temperatureDependence>
        <text evidence="3">Optimum temperature is between 30-35 degrees Celsius.</text>
    </temperatureDependence>
</comment>
<comment type="subcellular location">
    <subcellularLocation>
        <location evidence="5">Endoplasmic reticulum membrane</location>
        <topology evidence="5">Single-pass membrane protein</topology>
    </subcellularLocation>
</comment>
<comment type="tissue specificity">
    <text evidence="3">Expressed in roots and at lower levels in stems, leaves and plantlets.</text>
</comment>
<comment type="similarity">
    <text evidence="5">Belongs to the cytochrome P450 family.</text>
</comment>
<protein>
    <recommendedName>
        <fullName evidence="5">Cheilanthifoline synthase</fullName>
        <shortName evidence="5">CHS</shortName>
        <ecNumber evidence="3">1.14.19.65</ecNumber>
    </recommendedName>
    <alternativeName>
        <fullName evidence="4">Cytochrome P450 719A14</fullName>
    </alternativeName>
</protein>
<accession>B1NF20</accession>
<evidence type="ECO:0000250" key="1">
    <source>
        <dbReference type="UniProtKB" id="Q96242"/>
    </source>
</evidence>
<evidence type="ECO:0000255" key="2"/>
<evidence type="ECO:0000269" key="3">
    <source>
    </source>
</evidence>
<evidence type="ECO:0000303" key="4">
    <source>
    </source>
</evidence>
<evidence type="ECO:0000305" key="5"/>
<name>C719E_ARGME</name>
<proteinExistence type="evidence at protein level"/>
<dbReference type="EC" id="1.14.19.65" evidence="3"/>
<dbReference type="EMBL" id="EF451152">
    <property type="protein sequence ID" value="ABR14722.1"/>
    <property type="molecule type" value="mRNA"/>
</dbReference>
<dbReference type="SMR" id="B1NF20"/>
<dbReference type="KEGG" id="ag:ABR14722"/>
<dbReference type="BioCyc" id="MetaCyc:MONOMER-18679"/>
<dbReference type="GO" id="GO:0005789">
    <property type="term" value="C:endoplasmic reticulum membrane"/>
    <property type="evidence" value="ECO:0007669"/>
    <property type="project" value="UniProtKB-SubCell"/>
</dbReference>
<dbReference type="GO" id="GO:0047053">
    <property type="term" value="F:(S)-cheilanthifoline synthase activity"/>
    <property type="evidence" value="ECO:0000314"/>
    <property type="project" value="UniProtKB"/>
</dbReference>
<dbReference type="GO" id="GO:0020037">
    <property type="term" value="F:heme binding"/>
    <property type="evidence" value="ECO:0007669"/>
    <property type="project" value="InterPro"/>
</dbReference>
<dbReference type="GO" id="GO:0005506">
    <property type="term" value="F:iron ion binding"/>
    <property type="evidence" value="ECO:0007669"/>
    <property type="project" value="InterPro"/>
</dbReference>
<dbReference type="GO" id="GO:0004497">
    <property type="term" value="F:monooxygenase activity"/>
    <property type="evidence" value="ECO:0007669"/>
    <property type="project" value="UniProtKB-KW"/>
</dbReference>
<dbReference type="GO" id="GO:0033075">
    <property type="term" value="P:isoquinoline alkaloid biosynthetic process"/>
    <property type="evidence" value="ECO:0000314"/>
    <property type="project" value="UniProtKB"/>
</dbReference>
<dbReference type="FunFam" id="1.10.630.10:FF:000147">
    <property type="entry name" value="(S)-stylopine synthase 1"/>
    <property type="match status" value="1"/>
</dbReference>
<dbReference type="Gene3D" id="1.10.630.10">
    <property type="entry name" value="Cytochrome P450"/>
    <property type="match status" value="1"/>
</dbReference>
<dbReference type="InterPro" id="IPR001128">
    <property type="entry name" value="Cyt_P450"/>
</dbReference>
<dbReference type="InterPro" id="IPR017972">
    <property type="entry name" value="Cyt_P450_CS"/>
</dbReference>
<dbReference type="InterPro" id="IPR002401">
    <property type="entry name" value="Cyt_P450_E_grp-I"/>
</dbReference>
<dbReference type="InterPro" id="IPR036396">
    <property type="entry name" value="Cyt_P450_sf"/>
</dbReference>
<dbReference type="PANTHER" id="PTHR47944">
    <property type="entry name" value="CYTOCHROME P450 98A9"/>
    <property type="match status" value="1"/>
</dbReference>
<dbReference type="PANTHER" id="PTHR47944:SF4">
    <property type="entry name" value="OS09G0441700 PROTEIN"/>
    <property type="match status" value="1"/>
</dbReference>
<dbReference type="Pfam" id="PF00067">
    <property type="entry name" value="p450"/>
    <property type="match status" value="1"/>
</dbReference>
<dbReference type="PRINTS" id="PR00463">
    <property type="entry name" value="EP450I"/>
</dbReference>
<dbReference type="PRINTS" id="PR00385">
    <property type="entry name" value="P450"/>
</dbReference>
<dbReference type="SUPFAM" id="SSF48264">
    <property type="entry name" value="Cytochrome P450"/>
    <property type="match status" value="1"/>
</dbReference>
<dbReference type="PROSITE" id="PS00086">
    <property type="entry name" value="CYTOCHROME_P450"/>
    <property type="match status" value="1"/>
</dbReference>
<keyword id="KW-0256">Endoplasmic reticulum</keyword>
<keyword id="KW-0349">Heme</keyword>
<keyword id="KW-0408">Iron</keyword>
<keyword id="KW-0472">Membrane</keyword>
<keyword id="KW-0479">Metal-binding</keyword>
<keyword id="KW-0503">Monooxygenase</keyword>
<keyword id="KW-0560">Oxidoreductase</keyword>
<keyword id="KW-0812">Transmembrane</keyword>
<keyword id="KW-1133">Transmembrane helix</keyword>
<feature type="chain" id="PRO_0000418922" description="Cheilanthifoline synthase">
    <location>
        <begin position="1"/>
        <end position="494"/>
    </location>
</feature>
<feature type="transmembrane region" description="Helical" evidence="2">
    <location>
        <begin position="4"/>
        <end position="24"/>
    </location>
</feature>
<feature type="binding site" description="axial binding residue" evidence="1">
    <location>
        <position position="437"/>
    </location>
    <ligand>
        <name>heme</name>
        <dbReference type="ChEBI" id="CHEBI:30413"/>
    </ligand>
    <ligandPart>
        <name>Fe</name>
        <dbReference type="ChEBI" id="CHEBI:18248"/>
    </ligandPart>
</feature>
<organism>
    <name type="scientific">Argemone mexicana</name>
    <name type="common">Mexican prickly poppy</name>
    <dbReference type="NCBI Taxonomy" id="54796"/>
    <lineage>
        <taxon>Eukaryota</taxon>
        <taxon>Viridiplantae</taxon>
        <taxon>Streptophyta</taxon>
        <taxon>Embryophyta</taxon>
        <taxon>Tracheophyta</taxon>
        <taxon>Spermatophyta</taxon>
        <taxon>Magnoliopsida</taxon>
        <taxon>Ranunculales</taxon>
        <taxon>Papaveraceae</taxon>
        <taxon>Papaveroideae</taxon>
        <taxon>Argemone</taxon>
    </lineage>
</organism>
<gene>
    <name evidence="4" type="primary">CYP719A14</name>
</gene>
<sequence>MDETIWLIISTVIIVLGIAKFLLGKSSSSSLSTMEWPVGPKKLPIIGNLHQLGGDVFHVVLANLAKVYGSVFTIWVGSWRPMIIVSDIDKAWEVLVNKSSDYSARDMPDITKIISANWKNISCSDSGPFWHNLRKGLQGVALTPLNVASQYHLQERDMKNLINSMYKDASRKNGILKPLDYLKEETVRLLSRLIFGQDFQDEKLVVGMHHALDDLVRISGYASLADAFKFCENLPSHKKSIREVHEVKKRVENLIRPHIVSNPPTNTYLYFLKTQDFNEDIIISAILEVYDLGVDSTASTTVWALTFLVREQEIQEKLYREIVNVTGGKRSVKVEDVNKMPYLQAVMKETMRMKPIAPMAIPHKTSKDTSLMGKKINKGSVIMVNLYAIHHNPKVFPEPYKFMPERFLKDVNSDESLGNIKTMESSLLAFSAGMRICAGMELGKLQLAFGLASLVHEFKWSCSVDGKLPDLSEDHCFILLMKNPLEAKITCRIH</sequence>